<dbReference type="EC" id="1.2.1.24" evidence="7"/>
<dbReference type="EMBL" id="AF117335">
    <property type="protein sequence ID" value="AAF23590.1"/>
    <property type="molecule type" value="mRNA"/>
</dbReference>
<dbReference type="EMBL" id="AC007202">
    <property type="protein sequence ID" value="AAD30232.1"/>
    <property type="status" value="ALT_SEQ"/>
    <property type="molecule type" value="Genomic_DNA"/>
</dbReference>
<dbReference type="EMBL" id="CP002684">
    <property type="protein sequence ID" value="AEE36243.1"/>
    <property type="molecule type" value="Genomic_DNA"/>
</dbReference>
<dbReference type="EMBL" id="AF428367">
    <property type="protein sequence ID" value="AAL16297.1"/>
    <property type="molecule type" value="mRNA"/>
</dbReference>
<dbReference type="EMBL" id="AY056147">
    <property type="protein sequence ID" value="AAL07226.1"/>
    <property type="molecule type" value="mRNA"/>
</dbReference>
<dbReference type="PIR" id="E96825">
    <property type="entry name" value="E96825"/>
</dbReference>
<dbReference type="RefSeq" id="NP_178062.1">
    <property type="nucleotide sequence ID" value="NM_106592.5"/>
</dbReference>
<dbReference type="SMR" id="Q9SAK4"/>
<dbReference type="BioGRID" id="29501">
    <property type="interactions" value="1"/>
</dbReference>
<dbReference type="FunCoup" id="Q9SAK4">
    <property type="interactions" value="1645"/>
</dbReference>
<dbReference type="STRING" id="3702.Q9SAK4"/>
<dbReference type="MetOSite" id="Q9SAK4"/>
<dbReference type="PaxDb" id="3702-AT1G79440.1"/>
<dbReference type="ProteomicsDB" id="232490"/>
<dbReference type="EnsemblPlants" id="AT1G79440.1">
    <property type="protein sequence ID" value="AT1G79440.1"/>
    <property type="gene ID" value="AT1G79440"/>
</dbReference>
<dbReference type="GeneID" id="844282"/>
<dbReference type="Gramene" id="AT1G79440.1">
    <property type="protein sequence ID" value="AT1G79440.1"/>
    <property type="gene ID" value="AT1G79440"/>
</dbReference>
<dbReference type="KEGG" id="ath:AT1G79440"/>
<dbReference type="Araport" id="AT1G79440"/>
<dbReference type="TAIR" id="AT1G79440">
    <property type="gene designation" value="ALDH5F1"/>
</dbReference>
<dbReference type="eggNOG" id="KOG2451">
    <property type="taxonomic scope" value="Eukaryota"/>
</dbReference>
<dbReference type="HOGENOM" id="CLU_005391_5_0_1"/>
<dbReference type="InParanoid" id="Q9SAK4"/>
<dbReference type="OMA" id="IGELFCK"/>
<dbReference type="PhylomeDB" id="Q9SAK4"/>
<dbReference type="BioCyc" id="ARA:AT1G79440-MONOMER"/>
<dbReference type="BRENDA" id="1.2.1.24">
    <property type="organism ID" value="399"/>
</dbReference>
<dbReference type="UniPathway" id="UPA00733"/>
<dbReference type="PRO" id="PR:Q9SAK4"/>
<dbReference type="Proteomes" id="UP000006548">
    <property type="component" value="Chromosome 1"/>
</dbReference>
<dbReference type="ExpressionAtlas" id="Q9SAK4">
    <property type="expression patterns" value="baseline and differential"/>
</dbReference>
<dbReference type="GO" id="GO:0009507">
    <property type="term" value="C:chloroplast"/>
    <property type="evidence" value="ECO:0007005"/>
    <property type="project" value="TAIR"/>
</dbReference>
<dbReference type="GO" id="GO:0009570">
    <property type="term" value="C:chloroplast stroma"/>
    <property type="evidence" value="ECO:0007005"/>
    <property type="project" value="TAIR"/>
</dbReference>
<dbReference type="GO" id="GO:0005829">
    <property type="term" value="C:cytosol"/>
    <property type="evidence" value="ECO:0007005"/>
    <property type="project" value="TAIR"/>
</dbReference>
<dbReference type="GO" id="GO:0005759">
    <property type="term" value="C:mitochondrial matrix"/>
    <property type="evidence" value="ECO:0000314"/>
    <property type="project" value="TAIR"/>
</dbReference>
<dbReference type="GO" id="GO:0005739">
    <property type="term" value="C:mitochondrion"/>
    <property type="evidence" value="ECO:0007005"/>
    <property type="project" value="TAIR"/>
</dbReference>
<dbReference type="GO" id="GO:0005507">
    <property type="term" value="F:copper ion binding"/>
    <property type="evidence" value="ECO:0007005"/>
    <property type="project" value="TAIR"/>
</dbReference>
<dbReference type="GO" id="GO:0051287">
    <property type="term" value="F:NAD binding"/>
    <property type="evidence" value="ECO:0000314"/>
    <property type="project" value="TAIR"/>
</dbReference>
<dbReference type="GO" id="GO:0004777">
    <property type="term" value="F:succinate-semialdehyde dehydrogenase (NAD+) activity"/>
    <property type="evidence" value="ECO:0000314"/>
    <property type="project" value="TAIR"/>
</dbReference>
<dbReference type="GO" id="GO:0009943">
    <property type="term" value="P:adaxial/abaxial axis specification"/>
    <property type="evidence" value="ECO:0000315"/>
    <property type="project" value="UniProtKB"/>
</dbReference>
<dbReference type="GO" id="GO:0048825">
    <property type="term" value="P:cotyledon development"/>
    <property type="evidence" value="ECO:0000315"/>
    <property type="project" value="UniProtKB"/>
</dbReference>
<dbReference type="GO" id="GO:0006540">
    <property type="term" value="P:gamma-aminobutyrate shunt"/>
    <property type="evidence" value="ECO:0000314"/>
    <property type="project" value="TAIR"/>
</dbReference>
<dbReference type="GO" id="GO:0009450">
    <property type="term" value="P:gamma-aminobutyric acid catabolic process"/>
    <property type="evidence" value="ECO:0000314"/>
    <property type="project" value="TAIR"/>
</dbReference>
<dbReference type="GO" id="GO:0048366">
    <property type="term" value="P:leaf development"/>
    <property type="evidence" value="ECO:0000315"/>
    <property type="project" value="UniProtKB"/>
</dbReference>
<dbReference type="GO" id="GO:0010492">
    <property type="term" value="P:maintenance of shoot apical meristem identity"/>
    <property type="evidence" value="ECO:0000315"/>
    <property type="project" value="UniProtKB"/>
</dbReference>
<dbReference type="GO" id="GO:0072593">
    <property type="term" value="P:reactive oxygen species metabolic process"/>
    <property type="evidence" value="ECO:0000315"/>
    <property type="project" value="TAIR"/>
</dbReference>
<dbReference type="GO" id="GO:0009409">
    <property type="term" value="P:response to cold"/>
    <property type="evidence" value="ECO:0000270"/>
    <property type="project" value="UniProtKB"/>
</dbReference>
<dbReference type="GO" id="GO:0009408">
    <property type="term" value="P:response to heat"/>
    <property type="evidence" value="ECO:0000315"/>
    <property type="project" value="TAIR"/>
</dbReference>
<dbReference type="GO" id="GO:0009416">
    <property type="term" value="P:response to light stimulus"/>
    <property type="evidence" value="ECO:0000315"/>
    <property type="project" value="UniProtKB"/>
</dbReference>
<dbReference type="GO" id="GO:1902074">
    <property type="term" value="P:response to salt"/>
    <property type="evidence" value="ECO:0000270"/>
    <property type="project" value="UniProtKB"/>
</dbReference>
<dbReference type="CDD" id="cd07103">
    <property type="entry name" value="ALDH_F5_SSADH_GabD"/>
    <property type="match status" value="1"/>
</dbReference>
<dbReference type="FunFam" id="3.40.605.10:FF:000026">
    <property type="entry name" value="Aldehyde dehydrogenase, putative"/>
    <property type="match status" value="1"/>
</dbReference>
<dbReference type="FunFam" id="3.40.309.10:FF:000004">
    <property type="entry name" value="Succinate-semialdehyde dehydrogenase I"/>
    <property type="match status" value="1"/>
</dbReference>
<dbReference type="FunFam" id="3.40.605.10:FF:000005">
    <property type="entry name" value="Succinate-semialdehyde dehydrogenase I"/>
    <property type="match status" value="1"/>
</dbReference>
<dbReference type="Gene3D" id="3.40.605.10">
    <property type="entry name" value="Aldehyde Dehydrogenase, Chain A, domain 1"/>
    <property type="match status" value="1"/>
</dbReference>
<dbReference type="Gene3D" id="3.40.309.10">
    <property type="entry name" value="Aldehyde Dehydrogenase, Chain A, domain 2"/>
    <property type="match status" value="1"/>
</dbReference>
<dbReference type="InterPro" id="IPR016161">
    <property type="entry name" value="Ald_DH/histidinol_DH"/>
</dbReference>
<dbReference type="InterPro" id="IPR016163">
    <property type="entry name" value="Ald_DH_C"/>
</dbReference>
<dbReference type="InterPro" id="IPR016160">
    <property type="entry name" value="Ald_DH_CS_CYS"/>
</dbReference>
<dbReference type="InterPro" id="IPR029510">
    <property type="entry name" value="Ald_DH_CS_GLU"/>
</dbReference>
<dbReference type="InterPro" id="IPR016162">
    <property type="entry name" value="Ald_DH_N"/>
</dbReference>
<dbReference type="InterPro" id="IPR015590">
    <property type="entry name" value="Aldehyde_DH_dom"/>
</dbReference>
<dbReference type="InterPro" id="IPR050740">
    <property type="entry name" value="Aldehyde_DH_Superfamily"/>
</dbReference>
<dbReference type="InterPro" id="IPR010102">
    <property type="entry name" value="Succ_semiAld_DH"/>
</dbReference>
<dbReference type="NCBIfam" id="TIGR01780">
    <property type="entry name" value="SSADH"/>
    <property type="match status" value="1"/>
</dbReference>
<dbReference type="PANTHER" id="PTHR43353">
    <property type="entry name" value="SUCCINATE-SEMIALDEHYDE DEHYDROGENASE, MITOCHONDRIAL"/>
    <property type="match status" value="1"/>
</dbReference>
<dbReference type="PANTHER" id="PTHR43353:SF5">
    <property type="entry name" value="SUCCINATE-SEMIALDEHYDE DEHYDROGENASE, MITOCHONDRIAL"/>
    <property type="match status" value="1"/>
</dbReference>
<dbReference type="Pfam" id="PF00171">
    <property type="entry name" value="Aldedh"/>
    <property type="match status" value="1"/>
</dbReference>
<dbReference type="SUPFAM" id="SSF53720">
    <property type="entry name" value="ALDH-like"/>
    <property type="match status" value="1"/>
</dbReference>
<dbReference type="PROSITE" id="PS00070">
    <property type="entry name" value="ALDEHYDE_DEHYDR_CYS"/>
    <property type="match status" value="1"/>
</dbReference>
<dbReference type="PROSITE" id="PS00687">
    <property type="entry name" value="ALDEHYDE_DEHYDR_GLU"/>
    <property type="match status" value="1"/>
</dbReference>
<evidence type="ECO:0000250" key="1"/>
<evidence type="ECO:0000250" key="2">
    <source>
        <dbReference type="UniProtKB" id="P20000"/>
    </source>
</evidence>
<evidence type="ECO:0000250" key="3">
    <source>
        <dbReference type="UniProtKB" id="P51649"/>
    </source>
</evidence>
<evidence type="ECO:0000255" key="4"/>
<evidence type="ECO:0000255" key="5">
    <source>
        <dbReference type="PROSITE-ProRule" id="PRU10007"/>
    </source>
</evidence>
<evidence type="ECO:0000255" key="6">
    <source>
        <dbReference type="PROSITE-ProRule" id="PRU10008"/>
    </source>
</evidence>
<evidence type="ECO:0000269" key="7">
    <source>
    </source>
</evidence>
<evidence type="ECO:0000269" key="8">
    <source>
    </source>
</evidence>
<evidence type="ECO:0000269" key="9">
    <source>
    </source>
</evidence>
<evidence type="ECO:0000269" key="10">
    <source>
    </source>
</evidence>
<evidence type="ECO:0000269" key="11">
    <source>
    </source>
</evidence>
<evidence type="ECO:0000269" key="12">
    <source>
    </source>
</evidence>
<evidence type="ECO:0000269" key="13">
    <source>
    </source>
</evidence>
<evidence type="ECO:0000269" key="14">
    <source>
    </source>
</evidence>
<evidence type="ECO:0000303" key="15">
    <source>
    </source>
</evidence>
<evidence type="ECO:0000303" key="16">
    <source>
    </source>
</evidence>
<evidence type="ECO:0000303" key="17">
    <source>
    </source>
</evidence>
<evidence type="ECO:0000303" key="18">
    <source>
    </source>
</evidence>
<evidence type="ECO:0000303" key="19">
    <source>
    </source>
</evidence>
<evidence type="ECO:0000305" key="20"/>
<evidence type="ECO:0000312" key="21">
    <source>
        <dbReference type="Araport" id="AT1G79440"/>
    </source>
</evidence>
<evidence type="ECO:0000312" key="22">
    <source>
        <dbReference type="EMBL" id="AAD30232.1"/>
    </source>
</evidence>
<gene>
    <name evidence="16 18" type="primary">ALDH5F1</name>
    <name evidence="17 19" type="synonym">ENF1</name>
    <name evidence="15" type="synonym">SSADH1</name>
    <name evidence="21" type="ordered locus">At1g79440</name>
    <name evidence="22" type="ORF">T8K14.14</name>
</gene>
<keyword id="KW-1015">Disulfide bond</keyword>
<keyword id="KW-0496">Mitochondrion</keyword>
<keyword id="KW-0520">NAD</keyword>
<keyword id="KW-0560">Oxidoreductase</keyword>
<keyword id="KW-1185">Reference proteome</keyword>
<keyword id="KW-0809">Transit peptide</keyword>
<sequence length="528" mass="56559">MVIGAAARVAIGGCRKLISSHTSLLLVSSQCRQMSMDAQSVSEKLRSSGLLRTQGLIGGKWLDSYDNKTIKVNNPATGEIIADVACMGTKETNDAIASSYEAFTSWSRLTAGERSKVLRRWYDLLIAHKEELGQLITLEQGKPLKEAIGEVAYGASFIEYYAEEAKRVYGDIIPPNLSDRRLLVLKQPVGVVGAITPWNFPLAMITRKVGPALASGCTVVVKPSELTPLTALAAAELALQAGVPPGALNVVMGNAPEIGDALLTSPQVRKITFTGSTAVGKKLMAAAAPTVKKVSLELGGNAPSIVFDDADLDVAVKGTLAAKFRNSGQTCVCANRVLVQDGIYDKFAEAFSEAVQKLEVGDGFRDGTTQGPLINDAAVQKVETFVQDAVSKGAKIIIGGKRHSLGMTFYEPTVIRDVSDNMIMSKEEIFGPVAPLIRFKTEEDAIRIANDTIAGLAAYIFTNSVQRSWRVFEALEYGLVGVNEGLISTEVAPFGGVKQSGLGREGSKYGMDEYLEIKYVCLGDMNRH</sequence>
<comment type="function">
    <text evidence="7 8 9 13 14">Oxidizes specifically succinate semialdehyde. Involved in plant response to environmental stress by preventing the accumulation of reactive oxygen species, probably by regulating proline, gamma-hydroxybutyrate (GHB) and gamma-aminobutyrate (GABA) levels (PubMed:15642352). Required for the maintenance of the shoot apical meristem (SAM) structure and subsequent adaxial-abaxial axis-dependent development of cotyledons and leaves (PubMed:21690177, PubMed:25840087).</text>
</comment>
<comment type="catalytic activity">
    <reaction evidence="7">
        <text>succinate semialdehyde + NAD(+) + H2O = succinate + NADH + 2 H(+)</text>
        <dbReference type="Rhea" id="RHEA:13217"/>
        <dbReference type="ChEBI" id="CHEBI:15377"/>
        <dbReference type="ChEBI" id="CHEBI:15378"/>
        <dbReference type="ChEBI" id="CHEBI:30031"/>
        <dbReference type="ChEBI" id="CHEBI:57540"/>
        <dbReference type="ChEBI" id="CHEBI:57706"/>
        <dbReference type="ChEBI" id="CHEBI:57945"/>
        <dbReference type="EC" id="1.2.1.24"/>
    </reaction>
</comment>
<comment type="activity regulation">
    <text evidence="1">Competitive inhibition by NADH. Inhibited by ATP, ADP and AMP. Redox-regulated. Inhibited under oxydizing conditions (By similarity).</text>
</comment>
<comment type="biophysicochemical properties">
    <kinetics>
        <KM evidence="7">130 uM for NAD(+) (at 24 degrees Celsius)</KM>
    </kinetics>
    <phDependence>
        <text evidence="7">Optimum pH is 9-9.5.</text>
    </phDependence>
</comment>
<comment type="pathway">
    <text evidence="7">Amino-acid degradation; 4-aminobutanoate degradation.</text>
</comment>
<comment type="subunit">
    <text evidence="7">Homotetramer.</text>
</comment>
<comment type="subcellular location">
    <subcellularLocation>
        <location evidence="7">Mitochondrion matrix</location>
    </subcellularLocation>
</comment>
<comment type="tissue specificity">
    <text evidence="13">Expressed in developing leaf tissues.</text>
</comment>
<comment type="induction">
    <text evidence="10 12">Induced during cold (4 degrees Celsius) acclimation (PubMed:17461790). Induced by salt (NaCl) (PubMed:20122158).</text>
</comment>
<comment type="disruption phenotype">
    <text evidence="8 9 11 13 14">Plants are sensitive to UVB and heat stress, and accumulate elevated levels of H(2)O(2) (PubMed:12740438). High light-dependent increased of proline, gamma-hydroxybutyrate (GHB) and gamma-aminobutyrate (GABA) levels. Treatment with gamma-vinyl-gamma-aminobutyrate, a specific gamma-aminobutyrate (GABA)-transaminase inhibitor, prevents the accumulation of reactive oxygen intermediates (ROI) and GHB in ssadh mutants, inhibits cell death, and improves growth (PubMed:15642352). The ssadh mutant defects associated with stress responses are suppressed by POP2 disruption (PubMed:18846220). In enf1, pleiotropic developmental defects including dwarfism, and abnormal leaf shape (including abaxialized and adaxialized leaves) and cotyledon associated with altered GABA and SucA levels in shoots; these phenotypes are partially suppressed by the disruption of POP2/GABAT1, GSA1, GSA2 and HEMA1 (PubMed:21690177, PubMed:25840087). Abnormal FIL expression, especially in the adaxial side, in the leaf primordia (PubMed:21690177).</text>
</comment>
<comment type="similarity">
    <text evidence="20">Belongs to the aldehyde dehydrogenase family.</text>
</comment>
<comment type="sequence caution" evidence="20">
    <conflict type="erroneous gene model prediction">
        <sequence resource="EMBL-CDS" id="AAD30232"/>
    </conflict>
</comment>
<organism>
    <name type="scientific">Arabidopsis thaliana</name>
    <name type="common">Mouse-ear cress</name>
    <dbReference type="NCBI Taxonomy" id="3702"/>
    <lineage>
        <taxon>Eukaryota</taxon>
        <taxon>Viridiplantae</taxon>
        <taxon>Streptophyta</taxon>
        <taxon>Embryophyta</taxon>
        <taxon>Tracheophyta</taxon>
        <taxon>Spermatophyta</taxon>
        <taxon>Magnoliopsida</taxon>
        <taxon>eudicotyledons</taxon>
        <taxon>Gunneridae</taxon>
        <taxon>Pentapetalae</taxon>
        <taxon>rosids</taxon>
        <taxon>malvids</taxon>
        <taxon>Brassicales</taxon>
        <taxon>Brassicaceae</taxon>
        <taxon>Camelineae</taxon>
        <taxon>Arabidopsis</taxon>
    </lineage>
</organism>
<proteinExistence type="evidence at protein level"/>
<accession>Q9SAK4</accession>
<accession>Q9SEK4</accession>
<name>SSDH_ARATH</name>
<feature type="transit peptide" description="Mitochondrion" evidence="4">
    <location>
        <begin position="1"/>
        <end position="34"/>
    </location>
</feature>
<feature type="chain" id="PRO_0000256064" description="Succinate-semialdehyde dehydrogenase, mitochondrial">
    <location>
        <begin position="35"/>
        <end position="528"/>
    </location>
</feature>
<feature type="active site" description="Proton acceptor" evidence="5">
    <location>
        <position position="297"/>
    </location>
</feature>
<feature type="active site" description="Nucleophile" evidence="6">
    <location>
        <position position="331"/>
    </location>
</feature>
<feature type="binding site" evidence="2">
    <location>
        <begin position="196"/>
        <end position="198"/>
    </location>
    <ligand>
        <name>NAD(+)</name>
        <dbReference type="ChEBI" id="CHEBI:57540"/>
    </ligand>
</feature>
<feature type="binding site" evidence="3">
    <location>
        <position position="207"/>
    </location>
    <ligand>
        <name>substrate</name>
    </ligand>
</feature>
<feature type="binding site" evidence="3">
    <location>
        <begin position="222"/>
        <end position="225"/>
    </location>
    <ligand>
        <name>NAD(+)</name>
        <dbReference type="ChEBI" id="CHEBI:57540"/>
    </ligand>
</feature>
<feature type="binding site" evidence="3">
    <location>
        <begin position="275"/>
        <end position="280"/>
    </location>
    <ligand>
        <name>NAD(+)</name>
        <dbReference type="ChEBI" id="CHEBI:57540"/>
    </ligand>
</feature>
<feature type="binding site" evidence="2">
    <location>
        <position position="297"/>
    </location>
    <ligand>
        <name>NAD(+)</name>
        <dbReference type="ChEBI" id="CHEBI:57540"/>
    </ligand>
</feature>
<feature type="binding site" evidence="3">
    <location>
        <position position="325"/>
    </location>
    <ligand>
        <name>substrate</name>
    </ligand>
</feature>
<feature type="binding site" evidence="2">
    <location>
        <begin position="428"/>
        <end position="430"/>
    </location>
    <ligand>
        <name>NAD(+)</name>
        <dbReference type="ChEBI" id="CHEBI:57540"/>
    </ligand>
</feature>
<feature type="binding site" evidence="3">
    <location>
        <position position="488"/>
    </location>
    <ligand>
        <name>substrate</name>
    </ligand>
</feature>
<feature type="site" description="Transition state stabilizer" evidence="2">
    <location>
        <position position="199"/>
    </location>
</feature>
<feature type="disulfide bond" description="In inhibited form" evidence="3">
    <location>
        <begin position="331"/>
        <end position="333"/>
    </location>
</feature>
<reference key="1">
    <citation type="journal article" date="1999" name="Plant Physiol.">
        <title>Plant succinic semialdehyde dehydrogenase. Cloning, purification, localization in mitochondria, and regulation by adenine nucleotides.</title>
        <authorList>
            <person name="Busch K.B."/>
            <person name="Fromm H."/>
        </authorList>
    </citation>
    <scope>NUCLEOTIDE SEQUENCE [MRNA]</scope>
    <scope>FUNCTION</scope>
    <scope>ACTIVITY REGULATION</scope>
    <scope>BIOPHYSICOCHEMICAL PROPERTIES</scope>
    <scope>SUBUNIT</scope>
    <scope>SUBCELLULAR LOCATION</scope>
    <scope>CATALYTIC ACTIVITY</scope>
    <source>
        <strain>cv. Columbia</strain>
    </source>
</reference>
<reference key="2">
    <citation type="journal article" date="2000" name="Nature">
        <title>Sequence and analysis of chromosome 1 of the plant Arabidopsis thaliana.</title>
        <authorList>
            <person name="Theologis A."/>
            <person name="Ecker J.R."/>
            <person name="Palm C.J."/>
            <person name="Federspiel N.A."/>
            <person name="Kaul S."/>
            <person name="White O."/>
            <person name="Alonso J."/>
            <person name="Altafi H."/>
            <person name="Araujo R."/>
            <person name="Bowman C.L."/>
            <person name="Brooks S.Y."/>
            <person name="Buehler E."/>
            <person name="Chan A."/>
            <person name="Chao Q."/>
            <person name="Chen H."/>
            <person name="Cheuk R.F."/>
            <person name="Chin C.W."/>
            <person name="Chung M.K."/>
            <person name="Conn L."/>
            <person name="Conway A.B."/>
            <person name="Conway A.R."/>
            <person name="Creasy T.H."/>
            <person name="Dewar K."/>
            <person name="Dunn P."/>
            <person name="Etgu P."/>
            <person name="Feldblyum T.V."/>
            <person name="Feng J.-D."/>
            <person name="Fong B."/>
            <person name="Fujii C.Y."/>
            <person name="Gill J.E."/>
            <person name="Goldsmith A.D."/>
            <person name="Haas B."/>
            <person name="Hansen N.F."/>
            <person name="Hughes B."/>
            <person name="Huizar L."/>
            <person name="Hunter J.L."/>
            <person name="Jenkins J."/>
            <person name="Johnson-Hopson C."/>
            <person name="Khan S."/>
            <person name="Khaykin E."/>
            <person name="Kim C.J."/>
            <person name="Koo H.L."/>
            <person name="Kremenetskaia I."/>
            <person name="Kurtz D.B."/>
            <person name="Kwan A."/>
            <person name="Lam B."/>
            <person name="Langin-Hooper S."/>
            <person name="Lee A."/>
            <person name="Lee J.M."/>
            <person name="Lenz C.A."/>
            <person name="Li J.H."/>
            <person name="Li Y.-P."/>
            <person name="Lin X."/>
            <person name="Liu S.X."/>
            <person name="Liu Z.A."/>
            <person name="Luros J.S."/>
            <person name="Maiti R."/>
            <person name="Marziali A."/>
            <person name="Militscher J."/>
            <person name="Miranda M."/>
            <person name="Nguyen M."/>
            <person name="Nierman W.C."/>
            <person name="Osborne B.I."/>
            <person name="Pai G."/>
            <person name="Peterson J."/>
            <person name="Pham P.K."/>
            <person name="Rizzo M."/>
            <person name="Rooney T."/>
            <person name="Rowley D."/>
            <person name="Sakano H."/>
            <person name="Salzberg S.L."/>
            <person name="Schwartz J.R."/>
            <person name="Shinn P."/>
            <person name="Southwick A.M."/>
            <person name="Sun H."/>
            <person name="Tallon L.J."/>
            <person name="Tambunga G."/>
            <person name="Toriumi M.J."/>
            <person name="Town C.D."/>
            <person name="Utterback T."/>
            <person name="Van Aken S."/>
            <person name="Vaysberg M."/>
            <person name="Vysotskaia V.S."/>
            <person name="Walker M."/>
            <person name="Wu D."/>
            <person name="Yu G."/>
            <person name="Fraser C.M."/>
            <person name="Venter J.C."/>
            <person name="Davis R.W."/>
        </authorList>
    </citation>
    <scope>NUCLEOTIDE SEQUENCE [LARGE SCALE GENOMIC DNA]</scope>
    <source>
        <strain>cv. Columbia</strain>
    </source>
</reference>
<reference key="3">
    <citation type="journal article" date="2017" name="Plant J.">
        <title>Araport11: a complete reannotation of the Arabidopsis thaliana reference genome.</title>
        <authorList>
            <person name="Cheng C.Y."/>
            <person name="Krishnakumar V."/>
            <person name="Chan A.P."/>
            <person name="Thibaud-Nissen F."/>
            <person name="Schobel S."/>
            <person name="Town C.D."/>
        </authorList>
    </citation>
    <scope>GENOME REANNOTATION</scope>
    <source>
        <strain>cv. Columbia</strain>
    </source>
</reference>
<reference key="4">
    <citation type="journal article" date="2003" name="Science">
        <title>Empirical analysis of transcriptional activity in the Arabidopsis genome.</title>
        <authorList>
            <person name="Yamada K."/>
            <person name="Lim J."/>
            <person name="Dale J.M."/>
            <person name="Chen H."/>
            <person name="Shinn P."/>
            <person name="Palm C.J."/>
            <person name="Southwick A.M."/>
            <person name="Wu H.C."/>
            <person name="Kim C.J."/>
            <person name="Nguyen M."/>
            <person name="Pham P.K."/>
            <person name="Cheuk R.F."/>
            <person name="Karlin-Newmann G."/>
            <person name="Liu S.X."/>
            <person name="Lam B."/>
            <person name="Sakano H."/>
            <person name="Wu T."/>
            <person name="Yu G."/>
            <person name="Miranda M."/>
            <person name="Quach H.L."/>
            <person name="Tripp M."/>
            <person name="Chang C.H."/>
            <person name="Lee J.M."/>
            <person name="Toriumi M.J."/>
            <person name="Chan M.M."/>
            <person name="Tang C.C."/>
            <person name="Onodera C.S."/>
            <person name="Deng J.M."/>
            <person name="Akiyama K."/>
            <person name="Ansari Y."/>
            <person name="Arakawa T."/>
            <person name="Banh J."/>
            <person name="Banno F."/>
            <person name="Bowser L."/>
            <person name="Brooks S.Y."/>
            <person name="Carninci P."/>
            <person name="Chao Q."/>
            <person name="Choy N."/>
            <person name="Enju A."/>
            <person name="Goldsmith A.D."/>
            <person name="Gurjal M."/>
            <person name="Hansen N.F."/>
            <person name="Hayashizaki Y."/>
            <person name="Johnson-Hopson C."/>
            <person name="Hsuan V.W."/>
            <person name="Iida K."/>
            <person name="Karnes M."/>
            <person name="Khan S."/>
            <person name="Koesema E."/>
            <person name="Ishida J."/>
            <person name="Jiang P.X."/>
            <person name="Jones T."/>
            <person name="Kawai J."/>
            <person name="Kamiya A."/>
            <person name="Meyers C."/>
            <person name="Nakajima M."/>
            <person name="Narusaka M."/>
            <person name="Seki M."/>
            <person name="Sakurai T."/>
            <person name="Satou M."/>
            <person name="Tamse R."/>
            <person name="Vaysberg M."/>
            <person name="Wallender E.K."/>
            <person name="Wong C."/>
            <person name="Yamamura Y."/>
            <person name="Yuan S."/>
            <person name="Shinozaki K."/>
            <person name="Davis R.W."/>
            <person name="Theologis A."/>
            <person name="Ecker J.R."/>
        </authorList>
    </citation>
    <scope>NUCLEOTIDE SEQUENCE [LARGE SCALE MRNA]</scope>
    <source>
        <strain>cv. Columbia</strain>
    </source>
</reference>
<reference key="5">
    <citation type="journal article" date="2003" name="Proc. Natl. Acad. Sci. U.S.A.">
        <title>Mitochondrial succinic-semialdehyde dehydrogenase of the gamma-aminobutyrate shunt is required to restrict levels of reactive oxygen intermediates in plants.</title>
        <authorList>
            <person name="Bouche N."/>
            <person name="Fait A."/>
            <person name="Bouchez D."/>
            <person name="Moeller S.G."/>
            <person name="Fromm H."/>
        </authorList>
    </citation>
    <scope>FUNCTION</scope>
    <scope>DISRUPTION PHENOTYPE</scope>
</reference>
<reference key="6">
    <citation type="journal article" date="2004" name="Trends Plant Sci.">
        <title>The ALDH gene superfamily of Arabidopsis.</title>
        <authorList>
            <person name="Kirch H.-H."/>
            <person name="Bartels D."/>
            <person name="Wei Y."/>
            <person name="Schnable P.S."/>
            <person name="Wood A.J."/>
        </authorList>
    </citation>
    <scope>NOMENCLATURE</scope>
</reference>
<reference key="7">
    <citation type="journal article" date="2005" name="FEBS Lett.">
        <title>GABA shunt deficiencies and accumulation of reactive oxygen intermediates: insight from Arabidopsis mutants.</title>
        <authorList>
            <person name="Fait A."/>
            <person name="Yellin A."/>
            <person name="Fromm H."/>
        </authorList>
    </citation>
    <scope>FUNCTION</scope>
    <scope>DISRUPTION PHENOTYPE</scope>
    <source>
        <strain>cv. Columbia</strain>
    </source>
</reference>
<reference key="8">
    <citation type="journal article" date="2007" name="Plant J.">
        <title>Transcript and metabolite profiling during cold acclimation of Arabidopsis reveals an intricate relationship of cold-regulated gene expression with modifications in metabolite content.</title>
        <authorList>
            <person name="Kaplan F."/>
            <person name="Kopka J."/>
            <person name="Sung D.Y."/>
            <person name="Zhao W."/>
            <person name="Popp M."/>
            <person name="Porat R."/>
            <person name="Guy C.L."/>
        </authorList>
    </citation>
    <scope>INDUCTION BY COLD</scope>
</reference>
<reference key="9">
    <citation type="journal article" date="2008" name="PLoS ONE">
        <title>Mutants of GABA transaminase (POP2) suppress the severe phenotype of succinic semialdehyde dehydrogenase (ssadh) mutants in Arabidopsis.</title>
        <authorList>
            <person name="Ludewig F."/>
            <person name="Hueser A."/>
            <person name="Fromm H."/>
            <person name="Beauclair L."/>
            <person name="Bouche N."/>
        </authorList>
    </citation>
    <scope>DISRUPTION PHENOTYPE</scope>
    <source>
        <strain>cv. Columbia</strain>
    </source>
</reference>
<reference key="10">
    <citation type="journal article" date="2010" name="BMC Plant Biol.">
        <title>The Arabidopsis pop2-1 mutant reveals the involvement of GABA transaminase in salt stress tolerance.</title>
        <authorList>
            <person name="Renault H."/>
            <person name="Roussel V."/>
            <person name="El Amrani A."/>
            <person name="Arzel M."/>
            <person name="Renault D."/>
            <person name="Bouchereau A."/>
            <person name="Deleu C."/>
        </authorList>
    </citation>
    <scope>INDUCTION BY SALT</scope>
</reference>
<reference key="11">
    <citation type="journal article" date="2011" name="Front. Plant Sci.">
        <title>Aldehyde dehydrogenases in Arabidopsis thaliana: Biochemical requirements, metabolic pathways, and functional analysis.</title>
        <authorList>
            <person name="Stiti N."/>
            <person name="Missihoun T.D."/>
            <person name="Kotchoni S.O."/>
            <person name="Kirch H.-H."/>
            <person name="Bartels D."/>
        </authorList>
    </citation>
    <scope>GENE FAMILY</scope>
    <scope>NOMENCLATURE</scope>
</reference>
<reference key="12">
    <citation type="journal article" date="2011" name="Plant Cell Physiol.">
        <title>Succinic semialdehyde dehydrogenase is involved in the robust patterning of Arabidopsis leaves along the adaxial-abaxial axis.</title>
        <authorList>
            <person name="Toyokura K."/>
            <person name="Watanabe K."/>
            <person name="Oiwaka A."/>
            <person name="Kusano M."/>
            <person name="Tameshige T."/>
            <person name="Tatematsu K."/>
            <person name="Matsumoto N."/>
            <person name="Tsugeki R."/>
            <person name="Saito K."/>
            <person name="Okada K."/>
        </authorList>
    </citation>
    <scope>FUNCTION</scope>
    <scope>DISRUPTION PHENOTYPE</scope>
    <scope>TISSUE SPECIFICITY</scope>
    <source>
        <strain>cv. Columbia</strain>
    </source>
</reference>
<reference key="13">
    <citation type="journal article" date="2015" name="Plant Cell Physiol.">
        <title>Mutations in plastidial 5-aminolevulinic acid biosynthesis genes suppress a pleiotropic defect in shoot development of a mitochondrial GABA shunt mutant in Arabidopsis.</title>
        <authorList>
            <person name="Toyokura K."/>
            <person name="Yamaguchi K."/>
            <person name="Shigenobu S."/>
            <person name="Fukaki H."/>
            <person name="Tatematsu K."/>
            <person name="Okada K."/>
        </authorList>
    </citation>
    <scope>FUNCTION</scope>
    <scope>DISRUPTION PHENOTYPE</scope>
    <source>
        <strain>cv. Columbia</strain>
    </source>
</reference>
<protein>
    <recommendedName>
        <fullName evidence="15">Succinate-semialdehyde dehydrogenase, mitochondrial</fullName>
        <shortName evidence="15">At-SSADH1</shortName>
        <ecNumber evidence="7">1.2.1.24</ecNumber>
    </recommendedName>
    <alternativeName>
        <fullName evidence="16 18">Aldehyde dehydrogenase family 5 member F1</fullName>
    </alternativeName>
    <alternativeName>
        <fullName evidence="15">NAD(+)-dependent succinic semialdehyde dehydrogenase</fullName>
    </alternativeName>
    <alternativeName>
        <fullName evidence="17 19">Protein ENLARGED FIL EXPRESSING DOMAIN 1</fullName>
    </alternativeName>
</protein>